<reference key="1">
    <citation type="journal article" date="2002" name="Mol. Pharmacol.">
        <title>Molecular cloning and characterization of the human voltage-gated calcium channel alpha(2)delta-4 subunit.</title>
        <authorList>
            <person name="Qin N."/>
            <person name="Yagel S."/>
            <person name="Momplaisir M.-L."/>
            <person name="Codd E.E."/>
            <person name="D'Andrea M.R."/>
        </authorList>
    </citation>
    <scope>NUCLEOTIDE SEQUENCE [MRNA] (ISOFORMS 1; 4; 5 AND 6)</scope>
    <scope>FUNCTION</scope>
    <scope>TISSUE SPECIFICITY</scope>
    <scope>LACK OF GABAPENTIN-BINDING</scope>
    <scope>INTERACTION WITH CACNA1C AND CACNB3</scope>
    <scope>VARIANT VAL-327</scope>
</reference>
<reference key="2">
    <citation type="journal article" date="2007" name="BMC Genomics">
        <title>The full-ORF clone resource of the German cDNA consortium.</title>
        <authorList>
            <person name="Bechtel S."/>
            <person name="Rosenfelder H."/>
            <person name="Duda A."/>
            <person name="Schmidt C.P."/>
            <person name="Ernst U."/>
            <person name="Wellenreuther R."/>
            <person name="Mehrle A."/>
            <person name="Schuster C."/>
            <person name="Bahr A."/>
            <person name="Bloecker H."/>
            <person name="Heubner D."/>
            <person name="Hoerlein A."/>
            <person name="Michel G."/>
            <person name="Wedler H."/>
            <person name="Koehrer K."/>
            <person name="Ottenwaelder B."/>
            <person name="Poustka A."/>
            <person name="Wiemann S."/>
            <person name="Schupp I."/>
        </authorList>
    </citation>
    <scope>NUCLEOTIDE SEQUENCE [LARGE SCALE MRNA] (ISOFORMS 1 AND 2)</scope>
    <scope>VARIANT VAL-327</scope>
    <source>
        <tissue>Retina</tissue>
    </source>
</reference>
<reference key="3">
    <citation type="journal article" date="2006" name="Nature">
        <title>The finished DNA sequence of human chromosome 12.</title>
        <authorList>
            <person name="Scherer S.E."/>
            <person name="Muzny D.M."/>
            <person name="Buhay C.J."/>
            <person name="Chen R."/>
            <person name="Cree A."/>
            <person name="Ding Y."/>
            <person name="Dugan-Rocha S."/>
            <person name="Gill R."/>
            <person name="Gunaratne P."/>
            <person name="Harris R.A."/>
            <person name="Hawes A.C."/>
            <person name="Hernandez J."/>
            <person name="Hodgson A.V."/>
            <person name="Hume J."/>
            <person name="Jackson A."/>
            <person name="Khan Z.M."/>
            <person name="Kovar-Smith C."/>
            <person name="Lewis L.R."/>
            <person name="Lozado R.J."/>
            <person name="Metzker M.L."/>
            <person name="Milosavljevic A."/>
            <person name="Miner G.R."/>
            <person name="Montgomery K.T."/>
            <person name="Morgan M.B."/>
            <person name="Nazareth L.V."/>
            <person name="Scott G."/>
            <person name="Sodergren E."/>
            <person name="Song X.-Z."/>
            <person name="Steffen D."/>
            <person name="Lovering R.C."/>
            <person name="Wheeler D.A."/>
            <person name="Worley K.C."/>
            <person name="Yuan Y."/>
            <person name="Zhang Z."/>
            <person name="Adams C.Q."/>
            <person name="Ansari-Lari M.A."/>
            <person name="Ayele M."/>
            <person name="Brown M.J."/>
            <person name="Chen G."/>
            <person name="Chen Z."/>
            <person name="Clerc-Blankenburg K.P."/>
            <person name="Davis C."/>
            <person name="Delgado O."/>
            <person name="Dinh H.H."/>
            <person name="Draper H."/>
            <person name="Gonzalez-Garay M.L."/>
            <person name="Havlak P."/>
            <person name="Jackson L.R."/>
            <person name="Jacob L.S."/>
            <person name="Kelly S.H."/>
            <person name="Li L."/>
            <person name="Li Z."/>
            <person name="Liu J."/>
            <person name="Liu W."/>
            <person name="Lu J."/>
            <person name="Maheshwari M."/>
            <person name="Nguyen B.-V."/>
            <person name="Okwuonu G.O."/>
            <person name="Pasternak S."/>
            <person name="Perez L.M."/>
            <person name="Plopper F.J.H."/>
            <person name="Santibanez J."/>
            <person name="Shen H."/>
            <person name="Tabor P.E."/>
            <person name="Verduzco D."/>
            <person name="Waldron L."/>
            <person name="Wang Q."/>
            <person name="Williams G.A."/>
            <person name="Zhang J."/>
            <person name="Zhou J."/>
            <person name="Allen C.C."/>
            <person name="Amin A.G."/>
            <person name="Anyalebechi V."/>
            <person name="Bailey M."/>
            <person name="Barbaria J.A."/>
            <person name="Bimage K.E."/>
            <person name="Bryant N.P."/>
            <person name="Burch P.E."/>
            <person name="Burkett C.E."/>
            <person name="Burrell K.L."/>
            <person name="Calderon E."/>
            <person name="Cardenas V."/>
            <person name="Carter K."/>
            <person name="Casias K."/>
            <person name="Cavazos I."/>
            <person name="Cavazos S.R."/>
            <person name="Ceasar H."/>
            <person name="Chacko J."/>
            <person name="Chan S.N."/>
            <person name="Chavez D."/>
            <person name="Christopoulos C."/>
            <person name="Chu J."/>
            <person name="Cockrell R."/>
            <person name="Cox C.D."/>
            <person name="Dang M."/>
            <person name="Dathorne S.R."/>
            <person name="David R."/>
            <person name="Davis C.M."/>
            <person name="Davy-Carroll L."/>
            <person name="Deshazo D.R."/>
            <person name="Donlin J.E."/>
            <person name="D'Souza L."/>
            <person name="Eaves K.A."/>
            <person name="Egan A."/>
            <person name="Emery-Cohen A.J."/>
            <person name="Escotto M."/>
            <person name="Flagg N."/>
            <person name="Forbes L.D."/>
            <person name="Gabisi A.M."/>
            <person name="Garza M."/>
            <person name="Hamilton C."/>
            <person name="Henderson N."/>
            <person name="Hernandez O."/>
            <person name="Hines S."/>
            <person name="Hogues M.E."/>
            <person name="Huang M."/>
            <person name="Idlebird D.G."/>
            <person name="Johnson R."/>
            <person name="Jolivet A."/>
            <person name="Jones S."/>
            <person name="Kagan R."/>
            <person name="King L.M."/>
            <person name="Leal B."/>
            <person name="Lebow H."/>
            <person name="Lee S."/>
            <person name="LeVan J.M."/>
            <person name="Lewis L.C."/>
            <person name="London P."/>
            <person name="Lorensuhewa L.M."/>
            <person name="Loulseged H."/>
            <person name="Lovett D.A."/>
            <person name="Lucier A."/>
            <person name="Lucier R.L."/>
            <person name="Ma J."/>
            <person name="Madu R.C."/>
            <person name="Mapua P."/>
            <person name="Martindale A.D."/>
            <person name="Martinez E."/>
            <person name="Massey E."/>
            <person name="Mawhiney S."/>
            <person name="Meador M.G."/>
            <person name="Mendez S."/>
            <person name="Mercado C."/>
            <person name="Mercado I.C."/>
            <person name="Merritt C.E."/>
            <person name="Miner Z.L."/>
            <person name="Minja E."/>
            <person name="Mitchell T."/>
            <person name="Mohabbat F."/>
            <person name="Mohabbat K."/>
            <person name="Montgomery B."/>
            <person name="Moore N."/>
            <person name="Morris S."/>
            <person name="Munidasa M."/>
            <person name="Ngo R.N."/>
            <person name="Nguyen N.B."/>
            <person name="Nickerson E."/>
            <person name="Nwaokelemeh O.O."/>
            <person name="Nwokenkwo S."/>
            <person name="Obregon M."/>
            <person name="Oguh M."/>
            <person name="Oragunye N."/>
            <person name="Oviedo R.J."/>
            <person name="Parish B.J."/>
            <person name="Parker D.N."/>
            <person name="Parrish J."/>
            <person name="Parks K.L."/>
            <person name="Paul H.A."/>
            <person name="Payton B.A."/>
            <person name="Perez A."/>
            <person name="Perrin W."/>
            <person name="Pickens A."/>
            <person name="Primus E.L."/>
            <person name="Pu L.-L."/>
            <person name="Puazo M."/>
            <person name="Quiles M.M."/>
            <person name="Quiroz J.B."/>
            <person name="Rabata D."/>
            <person name="Reeves K."/>
            <person name="Ruiz S.J."/>
            <person name="Shao H."/>
            <person name="Sisson I."/>
            <person name="Sonaike T."/>
            <person name="Sorelle R.P."/>
            <person name="Sutton A.E."/>
            <person name="Svatek A.F."/>
            <person name="Svetz L.A."/>
            <person name="Tamerisa K.S."/>
            <person name="Taylor T.R."/>
            <person name="Teague B."/>
            <person name="Thomas N."/>
            <person name="Thorn R.D."/>
            <person name="Trejos Z.Y."/>
            <person name="Trevino B.K."/>
            <person name="Ukegbu O.N."/>
            <person name="Urban J.B."/>
            <person name="Vasquez L.I."/>
            <person name="Vera V.A."/>
            <person name="Villasana D.M."/>
            <person name="Wang L."/>
            <person name="Ward-Moore S."/>
            <person name="Warren J.T."/>
            <person name="Wei X."/>
            <person name="White F."/>
            <person name="Williamson A.L."/>
            <person name="Wleczyk R."/>
            <person name="Wooden H.S."/>
            <person name="Wooden S.H."/>
            <person name="Yen J."/>
            <person name="Yoon L."/>
            <person name="Yoon V."/>
            <person name="Zorrilla S.E."/>
            <person name="Nelson D."/>
            <person name="Kucherlapati R."/>
            <person name="Weinstock G."/>
            <person name="Gibbs R.A."/>
        </authorList>
    </citation>
    <scope>NUCLEOTIDE SEQUENCE [LARGE SCALE GENOMIC DNA]</scope>
</reference>
<reference key="4">
    <citation type="journal article" date="2004" name="Genome Res.">
        <title>The status, quality, and expansion of the NIH full-length cDNA project: the Mammalian Gene Collection (MGC).</title>
        <authorList>
            <consortium name="The MGC Project Team"/>
        </authorList>
    </citation>
    <scope>NUCLEOTIDE SEQUENCE [LARGE SCALE MRNA] (ISOFORM 7)</scope>
    <source>
        <tissue>Blood</tissue>
    </source>
</reference>
<reference key="5">
    <citation type="journal article" date="2006" name="Am. J. Hum. Genet.">
        <title>Mutation in the auxiliary calcium-channel subunit CACNA2D4 causes autosomal recessive cone dystrophy.</title>
        <authorList>
            <person name="Wycisk K.A."/>
            <person name="Zeitz C."/>
            <person name="Feil S."/>
            <person name="Wittmer M."/>
            <person name="Forster U."/>
            <person name="Neidhardt J."/>
            <person name="Wissinger B."/>
            <person name="Zrenner E."/>
            <person name="Wilke R."/>
            <person name="Kohl S."/>
            <person name="Berger W."/>
        </authorList>
    </citation>
    <scope>INVOLVEMENT IN RCD4</scope>
</reference>
<dbReference type="EMBL" id="AF516695">
    <property type="protein sequence ID" value="AAN06672.1"/>
    <property type="status" value="ALT_INIT"/>
    <property type="molecule type" value="mRNA"/>
</dbReference>
<dbReference type="EMBL" id="BX537436">
    <property type="protein sequence ID" value="CAD97678.1"/>
    <property type="molecule type" value="mRNA"/>
</dbReference>
<dbReference type="EMBL" id="BX537437">
    <property type="protein sequence ID" value="CAD97679.1"/>
    <property type="molecule type" value="mRNA"/>
</dbReference>
<dbReference type="EMBL" id="AC005342">
    <property type="status" value="NOT_ANNOTATED_CDS"/>
    <property type="molecule type" value="Genomic_DNA"/>
</dbReference>
<dbReference type="EMBL" id="AC005343">
    <property type="status" value="NOT_ANNOTATED_CDS"/>
    <property type="molecule type" value="Genomic_DNA"/>
</dbReference>
<dbReference type="EMBL" id="BC048288">
    <property type="protein sequence ID" value="AAH48288.1"/>
    <property type="status" value="ALT_SEQ"/>
    <property type="molecule type" value="mRNA"/>
</dbReference>
<dbReference type="CCDS" id="CCDS44785.1">
    <molecule id="Q7Z3S7-1"/>
</dbReference>
<dbReference type="RefSeq" id="NP_758952.4">
    <molecule id="Q7Z3S7-1"/>
    <property type="nucleotide sequence ID" value="NM_172364.4"/>
</dbReference>
<dbReference type="SMR" id="Q7Z3S7"/>
<dbReference type="ComplexPortal" id="CPX-8769">
    <property type="entry name" value="Cav1.1 voltage-gated calcium channel complex, CACNA2D4-CACNB1-CACNG1 variant"/>
</dbReference>
<dbReference type="ComplexPortal" id="CPX-8771">
    <property type="entry name" value="Cav1.1 voltage-gated calcium channel complex, CACNA2D4-CACNB2-CACNG1 variant"/>
</dbReference>
<dbReference type="ComplexPortal" id="CPX-8772">
    <property type="entry name" value="Cav1.1 voltage-gated calcium channel complex, CACNA2D4-CACNB3-CACNG1 variant"/>
</dbReference>
<dbReference type="ComplexPortal" id="CPX-8773">
    <property type="entry name" value="Cav1.1 voltage-gated calcium channel complex, CACNA2D4-CACNB4-CACNG1 variant"/>
</dbReference>
<dbReference type="ComplexPortal" id="CPX-8872">
    <property type="entry name" value="Cav1.2 voltage-gated calcium channel complex, CACNA2D4-CACNB1 variant"/>
</dbReference>
<dbReference type="ComplexPortal" id="CPX-8873">
    <property type="entry name" value="Cav1.2 voltage-gated calcium channel complex, CACNA2D4-CACNB2 variant"/>
</dbReference>
<dbReference type="ComplexPortal" id="CPX-8875">
    <property type="entry name" value="Cav1.2 voltage-gated calcium channel complex, CACNA2D4-CACNB3 variant"/>
</dbReference>
<dbReference type="ComplexPortal" id="CPX-8876">
    <property type="entry name" value="Cav1.2 voltage-gated calcium channel complex, CACNA2D4-CACNB4 variant"/>
</dbReference>
<dbReference type="FunCoup" id="Q7Z3S7">
    <property type="interactions" value="604"/>
</dbReference>
<dbReference type="IntAct" id="Q7Z3S7">
    <property type="interactions" value="1"/>
</dbReference>
<dbReference type="STRING" id="9606.ENSP00000372169"/>
<dbReference type="ChEMBL" id="CHEMBL2363032"/>
<dbReference type="DrugBank" id="DB13746">
    <property type="generic name" value="Bioallethrin"/>
</dbReference>
<dbReference type="DrugBank" id="DB11148">
    <property type="generic name" value="Butamben"/>
</dbReference>
<dbReference type="DrugBank" id="DB09235">
    <property type="generic name" value="Efonidipine"/>
</dbReference>
<dbReference type="DrugBank" id="DB00228">
    <property type="generic name" value="Enflurane"/>
</dbReference>
<dbReference type="DrugBank" id="DB00153">
    <property type="generic name" value="Ergocalciferol"/>
</dbReference>
<dbReference type="DrugBank" id="DB00622">
    <property type="generic name" value="Nicardipine"/>
</dbReference>
<dbReference type="DrugBank" id="DB00661">
    <property type="generic name" value="Verapamil"/>
</dbReference>
<dbReference type="TCDB" id="8.A.18.3.2">
    <property type="family name" value="the ca(2+) channel auxiliary subunit Alpha2Delta types 1-4 (cca-Alpha2Delta) family"/>
</dbReference>
<dbReference type="GlyCosmos" id="Q7Z3S7">
    <property type="glycosylation" value="2 sites, No reported glycans"/>
</dbReference>
<dbReference type="GlyGen" id="Q7Z3S7">
    <property type="glycosylation" value="3 sites, 1 O-linked glycan (1 site)"/>
</dbReference>
<dbReference type="iPTMnet" id="Q7Z3S7"/>
<dbReference type="PhosphoSitePlus" id="Q7Z3S7"/>
<dbReference type="BioMuta" id="CACNA2D4"/>
<dbReference type="DMDM" id="296434419"/>
<dbReference type="jPOST" id="Q7Z3S7"/>
<dbReference type="MassIVE" id="Q7Z3S7"/>
<dbReference type="PaxDb" id="9606-ENSP00000372169"/>
<dbReference type="PeptideAtlas" id="Q7Z3S7"/>
<dbReference type="ProteomicsDB" id="69073">
    <molecule id="Q7Z3S7-1"/>
</dbReference>
<dbReference type="ProteomicsDB" id="69074">
    <molecule id="Q7Z3S7-2"/>
</dbReference>
<dbReference type="ProteomicsDB" id="69076">
    <molecule id="Q7Z3S7-4"/>
</dbReference>
<dbReference type="ProteomicsDB" id="69077">
    <molecule id="Q7Z3S7-5"/>
</dbReference>
<dbReference type="ProteomicsDB" id="69078">
    <molecule id="Q7Z3S7-6"/>
</dbReference>
<dbReference type="Antibodypedia" id="22099">
    <property type="antibodies" value="203 antibodies from 24 providers"/>
</dbReference>
<dbReference type="DNASU" id="93589"/>
<dbReference type="Ensembl" id="ENST00000382722.10">
    <molecule id="Q7Z3S7-1"/>
    <property type="protein sequence ID" value="ENSP00000372169.4"/>
    <property type="gene ID" value="ENSG00000151062.15"/>
</dbReference>
<dbReference type="Ensembl" id="ENST00000545595.6">
    <molecule id="Q7Z3S7-7"/>
    <property type="protein sequence ID" value="ENSP00000442329.2"/>
    <property type="gene ID" value="ENSG00000151062.15"/>
</dbReference>
<dbReference type="Ensembl" id="ENST00000585708.5">
    <molecule id="Q7Z3S7-6"/>
    <property type="protein sequence ID" value="ENSP00000467697.1"/>
    <property type="gene ID" value="ENSG00000151062.15"/>
</dbReference>
<dbReference type="Ensembl" id="ENST00000586184.5">
    <molecule id="Q7Z3S7-5"/>
    <property type="protein sequence ID" value="ENSP00000465060.1"/>
    <property type="gene ID" value="ENSG00000151062.15"/>
</dbReference>
<dbReference type="Ensembl" id="ENST00000588077.5">
    <molecule id="Q7Z3S7-4"/>
    <property type="protein sequence ID" value="ENSP00000468530.1"/>
    <property type="gene ID" value="ENSG00000151062.15"/>
</dbReference>
<dbReference type="Ensembl" id="ENST00000642910.1">
    <molecule id="Q7Z3S7-6"/>
    <property type="protein sequence ID" value="ENSP00000494565.1"/>
    <property type="gene ID" value="ENSG00000284953.2"/>
</dbReference>
<dbReference type="Ensembl" id="ENST00000644981.1">
    <molecule id="Q7Z3S7-5"/>
    <property type="protein sequence ID" value="ENSP00000494395.1"/>
    <property type="gene ID" value="ENSG00000284953.2"/>
</dbReference>
<dbReference type="Ensembl" id="ENST00000645018.2">
    <molecule id="Q7Z3S7-1"/>
    <property type="protein sequence ID" value="ENSP00000495256.1"/>
    <property type="gene ID" value="ENSG00000284953.2"/>
</dbReference>
<dbReference type="Ensembl" id="ENST00000645225.1">
    <molecule id="Q7Z3S7-4"/>
    <property type="protein sequence ID" value="ENSP00000493490.1"/>
    <property type="gene ID" value="ENSG00000284953.2"/>
</dbReference>
<dbReference type="Ensembl" id="ENST00000646498.1">
    <molecule id="Q7Z3S7-7"/>
    <property type="protein sequence ID" value="ENSP00000494913.1"/>
    <property type="gene ID" value="ENSG00000284953.2"/>
</dbReference>
<dbReference type="GeneID" id="93589"/>
<dbReference type="KEGG" id="hsa:93589"/>
<dbReference type="MANE-Select" id="ENST00000382722.10">
    <property type="protein sequence ID" value="ENSP00000372169.4"/>
    <property type="RefSeq nucleotide sequence ID" value="NM_172364.5"/>
    <property type="RefSeq protein sequence ID" value="NP_758952.4"/>
</dbReference>
<dbReference type="UCSC" id="uc058jsm.1">
    <molecule id="Q7Z3S7-1"/>
    <property type="organism name" value="human"/>
</dbReference>
<dbReference type="AGR" id="HGNC:20202"/>
<dbReference type="CTD" id="93589"/>
<dbReference type="DisGeNET" id="93589"/>
<dbReference type="GeneCards" id="CACNA2D4"/>
<dbReference type="HGNC" id="HGNC:20202">
    <property type="gene designation" value="CACNA2D4"/>
</dbReference>
<dbReference type="HPA" id="ENSG00000151062">
    <property type="expression patterns" value="Tissue enriched (retina)"/>
</dbReference>
<dbReference type="MalaCards" id="CACNA2D4"/>
<dbReference type="MIM" id="608171">
    <property type="type" value="gene"/>
</dbReference>
<dbReference type="MIM" id="610478">
    <property type="type" value="phenotype"/>
</dbReference>
<dbReference type="neXtProt" id="NX_Q7Z3S7"/>
<dbReference type="OpenTargets" id="ENSG00000151062"/>
<dbReference type="Orphanet" id="1872">
    <property type="disease" value="Cone rod dystrophy"/>
</dbReference>
<dbReference type="Orphanet" id="215">
    <property type="disease" value="Congenital stationary night blindness"/>
</dbReference>
<dbReference type="PharmGKB" id="PA130546913"/>
<dbReference type="VEuPathDB" id="HostDB:ENSG00000151062"/>
<dbReference type="eggNOG" id="KOG2353">
    <property type="taxonomic scope" value="Eukaryota"/>
</dbReference>
<dbReference type="GeneTree" id="ENSGT00940000155997"/>
<dbReference type="HOGENOM" id="CLU_004660_1_1_1"/>
<dbReference type="InParanoid" id="Q7Z3S7"/>
<dbReference type="OMA" id="EIHRIHA"/>
<dbReference type="OrthoDB" id="10054666at2759"/>
<dbReference type="PAN-GO" id="Q7Z3S7">
    <property type="GO annotations" value="2 GO annotations based on evolutionary models"/>
</dbReference>
<dbReference type="PhylomeDB" id="Q7Z3S7"/>
<dbReference type="TreeFam" id="TF315824"/>
<dbReference type="PathwayCommons" id="Q7Z3S7"/>
<dbReference type="BioGRID-ORCS" id="93589">
    <property type="hits" value="9 hits in 1149 CRISPR screens"/>
</dbReference>
<dbReference type="ChiTaRS" id="CACNA2D4">
    <property type="organism name" value="human"/>
</dbReference>
<dbReference type="GenomeRNAi" id="93589"/>
<dbReference type="Pharos" id="Q7Z3S7">
    <property type="development level" value="Tbio"/>
</dbReference>
<dbReference type="PRO" id="PR:Q7Z3S7"/>
<dbReference type="Proteomes" id="UP000005640">
    <property type="component" value="Chromosome 12"/>
</dbReference>
<dbReference type="RNAct" id="Q7Z3S7">
    <property type="molecule type" value="protein"/>
</dbReference>
<dbReference type="Bgee" id="ENSG00000151062">
    <property type="expression patterns" value="Expressed in monocyte and 98 other cell types or tissues"/>
</dbReference>
<dbReference type="ExpressionAtlas" id="Q7Z3S7">
    <property type="expression patterns" value="baseline and differential"/>
</dbReference>
<dbReference type="GO" id="GO:0005891">
    <property type="term" value="C:voltage-gated calcium channel complex"/>
    <property type="evidence" value="ECO:0000314"/>
    <property type="project" value="UniProtKB"/>
</dbReference>
<dbReference type="GO" id="GO:0046872">
    <property type="term" value="F:metal ion binding"/>
    <property type="evidence" value="ECO:0007669"/>
    <property type="project" value="UniProtKB-KW"/>
</dbReference>
<dbReference type="GO" id="GO:0005245">
    <property type="term" value="F:voltage-gated calcium channel activity"/>
    <property type="evidence" value="ECO:0000314"/>
    <property type="project" value="UniProtKB"/>
</dbReference>
<dbReference type="GO" id="GO:0070588">
    <property type="term" value="P:calcium ion transmembrane transport"/>
    <property type="evidence" value="ECO:0000314"/>
    <property type="project" value="UniProtKB"/>
</dbReference>
<dbReference type="GO" id="GO:0050908">
    <property type="term" value="P:detection of light stimulus involved in visual perception"/>
    <property type="evidence" value="ECO:0000315"/>
    <property type="project" value="UniProtKB"/>
</dbReference>
<dbReference type="CDD" id="cd01463">
    <property type="entry name" value="vWA_VGCC_like"/>
    <property type="match status" value="1"/>
</dbReference>
<dbReference type="FunFam" id="3.30.450.20:FF:000012">
    <property type="entry name" value="Calcium channel, voltage-dependent, alpha2/delta subunit 3"/>
    <property type="match status" value="1"/>
</dbReference>
<dbReference type="FunFam" id="3.40.50.410:FF:000007">
    <property type="entry name" value="Calcium voltage-gated channel auxiliary subunit alpha2delta 3"/>
    <property type="match status" value="1"/>
</dbReference>
<dbReference type="Gene3D" id="3.30.450.20">
    <property type="entry name" value="PAS domain"/>
    <property type="match status" value="1"/>
</dbReference>
<dbReference type="Gene3D" id="3.40.50.410">
    <property type="entry name" value="von Willebrand factor, type A domain"/>
    <property type="match status" value="1"/>
</dbReference>
<dbReference type="InterPro" id="IPR051173">
    <property type="entry name" value="Ca_channel_alpha-2/delta"/>
</dbReference>
<dbReference type="InterPro" id="IPR013680">
    <property type="entry name" value="VDCC_a2/dsu"/>
</dbReference>
<dbReference type="InterPro" id="IPR013608">
    <property type="entry name" value="VWA_N"/>
</dbReference>
<dbReference type="InterPro" id="IPR002035">
    <property type="entry name" value="VWF_A"/>
</dbReference>
<dbReference type="InterPro" id="IPR036465">
    <property type="entry name" value="vWFA_dom_sf"/>
</dbReference>
<dbReference type="PANTHER" id="PTHR10166">
    <property type="entry name" value="VOLTAGE-DEPENDENT CALCIUM CHANNEL SUBUNIT ALPHA-2/DELTA-RELATED"/>
    <property type="match status" value="1"/>
</dbReference>
<dbReference type="PANTHER" id="PTHR10166:SF59">
    <property type="entry name" value="VOLTAGE-DEPENDENT CALCIUM CHANNEL SUBUNIT ALPHA-2_DELTA-4"/>
    <property type="match status" value="1"/>
</dbReference>
<dbReference type="Pfam" id="PF08473">
    <property type="entry name" value="VGCC_alpha2"/>
    <property type="match status" value="1"/>
</dbReference>
<dbReference type="Pfam" id="PF13768">
    <property type="entry name" value="VWA_3"/>
    <property type="match status" value="1"/>
</dbReference>
<dbReference type="Pfam" id="PF08399">
    <property type="entry name" value="VWA_N"/>
    <property type="match status" value="1"/>
</dbReference>
<dbReference type="SMART" id="SM00327">
    <property type="entry name" value="VWA"/>
    <property type="match status" value="1"/>
</dbReference>
<dbReference type="SUPFAM" id="SSF53300">
    <property type="entry name" value="vWA-like"/>
    <property type="match status" value="1"/>
</dbReference>
<dbReference type="PROSITE" id="PS50234">
    <property type="entry name" value="VWFA"/>
    <property type="match status" value="1"/>
</dbReference>
<accession>Q7Z3S7</accession>
<accession>Q7Z3S8</accession>
<accession>Q86XZ5</accession>
<accession>Q8IZS9</accession>
<evidence type="ECO:0000250" key="1"/>
<evidence type="ECO:0000255" key="2"/>
<evidence type="ECO:0000255" key="3">
    <source>
        <dbReference type="PROSITE-ProRule" id="PRU00219"/>
    </source>
</evidence>
<evidence type="ECO:0000269" key="4">
    <source>
    </source>
</evidence>
<evidence type="ECO:0000269" key="5">
    <source>
    </source>
</evidence>
<evidence type="ECO:0000269" key="6">
    <source>
    </source>
</evidence>
<evidence type="ECO:0000303" key="7">
    <source>
    </source>
</evidence>
<evidence type="ECO:0000303" key="8">
    <source>
    </source>
</evidence>
<evidence type="ECO:0000303" key="9">
    <source>
    </source>
</evidence>
<evidence type="ECO:0000305" key="10"/>
<sequence length="1137" mass="127938">MVCGCSALLPLPNPRPTMPATPNFLANPSSSSRWIPLQPMPVAWAFVQKTSALLWLLLLGTSLSPAWGQAKIPLETVKLWADTFGGDLYNTVTKYSGSLLLQKKYKDVESSLKIEEVDGLELVRKFSEDMENMLRRKVEAVQNLVEAAEEADLNHEFNESLVFDYYNSVLINERDEKGNFVELGAEFLLESNAHFSNLPVNTSISSVQLPTNVYNKDPDILNGVYMSEALNAVFVENFQRDPTLTWQYFGSATGFFRIYPGIKWTPDENGVITFDCRNRGWYIQAATSPKDIVILVDVSGSMKGLRMTIAKHTITTILDTLGENDFINIIAYNDYVHYIEPCFKGILVQADRDNREHFKLLVEELMVKGVGVVDQALREAFQILKQFQEAKQGSLCNQAIMLISDGAVEDYEPVFEKYNWPDCKVRVFTYLIGREVSFADRMKWIACNNKGYYTQISTLADTQENVMEYLHVLSRPMVINHDHDIIWTEAYMDSKLLSSQAQSLTLLTTVAMPVFSKKNETRSHGILLGVVGSDVALRELMKLAPRYKLGVHGYAFLNTNNGYILSHPDLRPLYREGKKLKPKPNYNSVDLSEVEWEDQAESLRTAMINRETGTLSMDVKVPMDKGKRVLFLTNDYFFTDISDTPFSLGVVLSRGHGEYILLGNTSVEEGLHDLLHPDLALAGDWIYCITDIDPDHRKLSQLEAMIRFLTRKDPDLECDEELVREVLFDAVVTAPMEAYWTALALNMSEESEHVVDMAFLGTRAGLLRSSLFVGSEKVSDRKFLTPEDEASVFTLDRFPLWYRQASEHPAGSFVFNLRWAEGPESAGEPMVVTASTAVAVTVDKRTAIAAAAGVQMKLEFLQRKFWAATRQCSTVDGPCTQSCEDSDLDCFVIDNNGFILISKRSRETGRFLGEVDGAVLTQLLSMGVFSQVTMYDYQAMCKPSSHHHSAAQPLVSPISAFLTATRWLLQELVLFLLEWSVWGSWYDRGAEAKSVFHHSHKHKKQDPLQPCDTEYPVFVYQPAIREANGIVECGPCQKVFVVQQIPNSNLLLLVTDPTCDCSIFPPVLQEATEVKYNASVKCDRMRSQKLRRRPDSCHAFHPEENAQDCGGASDTSASPPLLLLPVCAWGLLPQLLR</sequence>
<organism>
    <name type="scientific">Homo sapiens</name>
    <name type="common">Human</name>
    <dbReference type="NCBI Taxonomy" id="9606"/>
    <lineage>
        <taxon>Eukaryota</taxon>
        <taxon>Metazoa</taxon>
        <taxon>Chordata</taxon>
        <taxon>Craniata</taxon>
        <taxon>Vertebrata</taxon>
        <taxon>Euteleostomi</taxon>
        <taxon>Mammalia</taxon>
        <taxon>Eutheria</taxon>
        <taxon>Euarchontoglires</taxon>
        <taxon>Primates</taxon>
        <taxon>Haplorrhini</taxon>
        <taxon>Catarrhini</taxon>
        <taxon>Hominidae</taxon>
        <taxon>Homo</taxon>
    </lineage>
</organism>
<comment type="function">
    <text evidence="4">The alpha-2/delta subunit of voltage-dependent calcium channels regulates calcium current density and activation/inactivation kinetics of the calcium channel.</text>
</comment>
<comment type="subunit">
    <text evidence="4 10">Dimer formed of alpha-2-2 and delta-2 chains; disulfide-linked. Voltage-dependent calcium channels are multisubunit complexes, consisting of alpha-1 (CACNA1), alpha-2 (CACNA2D), beta (CACNB) and delta (CACNA2D) subunits in a 1:1:1:1 ratio (Probable). Interacts with CACNA1C and CACNB3.</text>
</comment>
<comment type="subcellular location">
    <subcellularLocation>
        <location evidence="10">Membrane</location>
        <topology evidence="10">Single-pass type I membrane protein</topology>
    </subcellularLocation>
</comment>
<comment type="alternative products">
    <event type="alternative splicing"/>
    <isoform>
        <id>Q7Z3S7-1</id>
        <name>1</name>
        <name>Alpha2delta-4a</name>
        <sequence type="displayed"/>
    </isoform>
    <isoform>
        <id>Q7Z3S7-2</id>
        <name>2</name>
        <sequence type="described" ref="VSP_028070"/>
    </isoform>
    <isoform>
        <id>Q7Z3S7-4</id>
        <name>4</name>
        <name>Alpha2delta-4b</name>
        <sequence type="described" ref="VSP_028069"/>
    </isoform>
    <isoform>
        <id>Q7Z3S7-5</id>
        <name>5</name>
        <name>Alpha2delta-4c</name>
        <sequence type="described" ref="VSP_028071"/>
    </isoform>
    <isoform>
        <id>Q7Z3S7-6</id>
        <name>6</name>
        <name>Alpha2delta-4d</name>
        <sequence type="described" ref="VSP_028069 VSP_028071"/>
    </isoform>
    <isoform>
        <id>Q7Z3S7-7</id>
        <name>7</name>
        <sequence type="described" ref="VSP_044107 VSP_044108 VSP_044109 VSP_044110"/>
    </isoform>
</comment>
<comment type="tissue specificity">
    <text evidence="4">Predominantly expressed in certain types of endocrine cells. Present in the Paneth cells of the small intestine. Also present in the erythroblasts in the fetal liver, in the cells of the zona reticularis of the adrenal gland and in the basophils of the pituitary. Present at low level in some brain regions such as the cerebellum (at protein level).</text>
</comment>
<comment type="domain">
    <text evidence="1">The MIDAS-like motif in the VWFA domain binds divalent metal cations and is required to promote trafficking of the alpha-1 (CACNA1) subunit to the plasma membrane by an integrin-like switch.</text>
</comment>
<comment type="PTM">
    <text evidence="1">May be proteolytically processed into subunits alpha-2-4 and delta-4 that are disulfide-linked. It is however unclear whether such cleavage really takes place in vivo and has a functional role (By similarity).</text>
</comment>
<comment type="disease" evidence="5">
    <disease id="DI-02262">
        <name>Retinal cone dystrophy 4</name>
        <acronym>RCD4</acronym>
        <description>Characterized by minimal symptoms except for slowly progressive reduction in visual acuity.</description>
        <dbReference type="MIM" id="610478"/>
    </disease>
    <text>The disease is caused by variants affecting the gene represented in this entry.</text>
</comment>
<comment type="miscellaneous">
    <text>In contrast to CACNA2D1 and CACNA2D2, it does not bind gabapentin, an antiepileptic drug.</text>
</comment>
<comment type="miscellaneous">
    <molecule>Isoform 2</molecule>
    <text evidence="10">May be due to an intron retention.</text>
</comment>
<comment type="miscellaneous">
    <molecule>Isoform 7</molecule>
    <text evidence="10">May be produced at very low levels due to a premature stop codon in the mRNA, leading to nonsense-mediated mRNA decay.</text>
</comment>
<comment type="similarity">
    <text evidence="10">Belongs to the calcium channel subunit alpha-2/delta family.</text>
</comment>
<comment type="sequence caution" evidence="10">
    <conflict type="erroneous translation">
        <sequence resource="EMBL-CDS" id="AAH48288"/>
    </conflict>
    <text>Wrong choice of frame.</text>
</comment>
<comment type="sequence caution" evidence="10">
    <conflict type="erroneous initiation">
        <sequence resource="EMBL-CDS" id="AAN06672"/>
    </conflict>
    <text>Truncated N-terminus.</text>
</comment>
<keyword id="KW-0025">Alternative splicing</keyword>
<keyword id="KW-0106">Calcium</keyword>
<keyword id="KW-0107">Calcium channel</keyword>
<keyword id="KW-0109">Calcium transport</keyword>
<keyword id="KW-1015">Disulfide bond</keyword>
<keyword id="KW-0325">Glycoprotein</keyword>
<keyword id="KW-0407">Ion channel</keyword>
<keyword id="KW-0406">Ion transport</keyword>
<keyword id="KW-0472">Membrane</keyword>
<keyword id="KW-0479">Metal-binding</keyword>
<keyword id="KW-1267">Proteomics identification</keyword>
<keyword id="KW-1185">Reference proteome</keyword>
<keyword id="KW-0732">Signal</keyword>
<keyword id="KW-0812">Transmembrane</keyword>
<keyword id="KW-1133">Transmembrane helix</keyword>
<keyword id="KW-0813">Transport</keyword>
<keyword id="KW-0851">Voltage-gated channel</keyword>
<feature type="signal peptide" evidence="2">
    <location>
        <begin position="1"/>
        <end position="19"/>
    </location>
</feature>
<feature type="chain" id="PRO_0000304655" description="Voltage-dependent calcium channel subunit alpha-2/delta-4">
    <location>
        <begin position="20"/>
        <end position="1137"/>
    </location>
</feature>
<feature type="chain" id="PRO_0000304656" description="Voltage-dependent calcium channel subunit alpha-2-4" evidence="2">
    <location>
        <begin position="20"/>
        <end position="991"/>
    </location>
</feature>
<feature type="chain" id="PRO_0000304657" description="Voltage-dependent calcium channel subunit delta-4" evidence="2">
    <location>
        <begin position="992"/>
        <end position="1137"/>
    </location>
</feature>
<feature type="topological domain" description="Extracellular" evidence="2">
    <location>
        <begin position="20"/>
        <end position="1115"/>
    </location>
</feature>
<feature type="transmembrane region" description="Helical" evidence="2">
    <location>
        <begin position="1116"/>
        <end position="1136"/>
    </location>
</feature>
<feature type="topological domain" description="Cytoplasmic" evidence="2">
    <location>
        <position position="1137"/>
    </location>
</feature>
<feature type="domain" description="VWFA" evidence="3">
    <location>
        <begin position="291"/>
        <end position="473"/>
    </location>
</feature>
<feature type="domain" description="Cache">
    <location>
        <begin position="487"/>
        <end position="580"/>
    </location>
</feature>
<feature type="short sequence motif" description="MIDAS-like motif">
    <location>
        <begin position="297"/>
        <end position="301"/>
    </location>
</feature>
<feature type="binding site" evidence="1">
    <location>
        <position position="297"/>
    </location>
    <ligand>
        <name>a divalent metal cation</name>
        <dbReference type="ChEBI" id="CHEBI:60240"/>
    </ligand>
</feature>
<feature type="binding site" evidence="1">
    <location>
        <position position="299"/>
    </location>
    <ligand>
        <name>a divalent metal cation</name>
        <dbReference type="ChEBI" id="CHEBI:60240"/>
    </ligand>
</feature>
<feature type="binding site" evidence="1">
    <location>
        <position position="301"/>
    </location>
    <ligand>
        <name>a divalent metal cation</name>
        <dbReference type="ChEBI" id="CHEBI:60240"/>
    </ligand>
</feature>
<feature type="glycosylation site" description="N-linked (GlcNAc...) asparagine" evidence="2">
    <location>
        <position position="201"/>
    </location>
</feature>
<feature type="glycosylation site" description="N-linked (GlcNAc...) asparagine" evidence="2">
    <location>
        <position position="664"/>
    </location>
</feature>
<feature type="disulfide bond" description="Interchain (between alpha-2-4 and delta-4 chains)" evidence="1">
    <location>
        <begin position="447"/>
        <end position="1097"/>
    </location>
</feature>
<feature type="splice variant" id="VSP_044107" description="In isoform 7." evidence="8">
    <location>
        <begin position="1"/>
        <end position="855"/>
    </location>
</feature>
<feature type="splice variant" id="VSP_028069" description="In isoform 4 and isoform 6." evidence="7">
    <original>MVCGCSALLPLPNPRPTMPATPNFLANPSSSSRWIPLQPMPVAWAFVQKTSALLWLLLLGTSLSPAWGQAKIPLET</original>
    <variation>MAVALGTRRRDR</variation>
    <location>
        <begin position="1"/>
        <end position="76"/>
    </location>
</feature>
<feature type="splice variant" id="VSP_044108" description="In isoform 7." evidence="8">
    <location>
        <begin position="872"/>
        <end position="886"/>
    </location>
</feature>
<feature type="splice variant" id="VSP_044109" description="In isoform 7." evidence="8">
    <original>TGRF</original>
    <variation>SDYV</variation>
    <location>
        <begin position="908"/>
        <end position="911"/>
    </location>
</feature>
<feature type="splice variant" id="VSP_044110" description="In isoform 7." evidence="8">
    <location>
        <begin position="912"/>
        <end position="1137"/>
    </location>
</feature>
<feature type="splice variant" id="VSP_028070" description="In isoform 2." evidence="9">
    <location>
        <begin position="975"/>
        <end position="1137"/>
    </location>
</feature>
<feature type="splice variant" id="VSP_028071" description="In isoform 5 and isoform 6." evidence="7">
    <original>ENAQDCGGASDTSASPPLLLLPVCAWGLLPQLLR</original>
    <variation>VRVEADRGWAGFSSPNPLCLGLCPCRQEHIGMPMNTPVPVLLGGNIRVYAL</variation>
    <location>
        <begin position="1104"/>
        <end position="1137"/>
    </location>
</feature>
<feature type="sequence variant" id="VAR_035049" description="In dbSNP:rs10735005." evidence="4 6">
    <original>I</original>
    <variation>V</variation>
    <location>
        <position position="327"/>
    </location>
</feature>
<feature type="sequence variant" id="VAR_035050" description="In dbSNP:rs36077411.">
    <original>R</original>
    <variation>H</variation>
    <location>
        <position position="863"/>
    </location>
</feature>
<feature type="sequence variant" id="VAR_035051" description="In dbSNP:rs35331095.">
    <original>T</original>
    <variation>M</variation>
    <location>
        <position position="869"/>
    </location>
</feature>
<feature type="sequence conflict" description="In Ref. 2; CAD97678." evidence="10" ref="2">
    <original>K</original>
    <variation>N</variation>
    <location>
        <position position="368"/>
    </location>
</feature>
<feature type="sequence conflict" description="In Ref. 1; AAN06672." evidence="10" ref="1">
    <original>V</original>
    <variation>A</variation>
    <location>
        <position position="650"/>
    </location>
</feature>
<feature type="sequence conflict" description="In Ref. 2; CAD97679." evidence="10" ref="2">
    <original>T</original>
    <variation>A</variation>
    <location>
        <position position="710"/>
    </location>
</feature>
<feature type="sequence conflict" description="In Ref. 1; AAN06672." evidence="10" ref="1">
    <original>C</original>
    <variation>Y</variation>
    <location>
        <position position="879"/>
    </location>
</feature>
<feature type="sequence conflict" description="In Ref. 2; CAD97679." evidence="10" ref="2">
    <original>G</original>
    <variation>E</variation>
    <location>
        <position position="1034"/>
    </location>
</feature>
<name>CA2D4_HUMAN</name>
<gene>
    <name type="primary">CACNA2D4</name>
</gene>
<proteinExistence type="evidence at protein level"/>
<protein>
    <recommendedName>
        <fullName>Voltage-dependent calcium channel subunit alpha-2/delta-4</fullName>
    </recommendedName>
    <alternativeName>
        <fullName>Voltage-gated calcium channel subunit alpha-2/delta-4</fullName>
    </alternativeName>
    <component>
        <recommendedName>
            <fullName>Voltage-dependent calcium channel subunit alpha-2-4</fullName>
        </recommendedName>
    </component>
    <component>
        <recommendedName>
            <fullName>Voltage-dependent calcium channel subunit delta-4</fullName>
        </recommendedName>
    </component>
</protein>